<name>NUOB_FRAT1</name>
<organism>
    <name type="scientific">Francisella tularensis subsp. tularensis (strain FSC 198)</name>
    <dbReference type="NCBI Taxonomy" id="393115"/>
    <lineage>
        <taxon>Bacteria</taxon>
        <taxon>Pseudomonadati</taxon>
        <taxon>Pseudomonadota</taxon>
        <taxon>Gammaproteobacteria</taxon>
        <taxon>Thiotrichales</taxon>
        <taxon>Francisellaceae</taxon>
        <taxon>Francisella</taxon>
    </lineage>
</organism>
<protein>
    <recommendedName>
        <fullName evidence="1">NADH-quinone oxidoreductase subunit B</fullName>
        <ecNumber evidence="1">7.1.1.-</ecNumber>
    </recommendedName>
    <alternativeName>
        <fullName evidence="1">NADH dehydrogenase I subunit B</fullName>
    </alternativeName>
    <alternativeName>
        <fullName evidence="1">NDH-1 subunit B</fullName>
    </alternativeName>
</protein>
<proteinExistence type="inferred from homology"/>
<comment type="function">
    <text evidence="1">NDH-1 shuttles electrons from NADH, via FMN and iron-sulfur (Fe-S) centers, to quinones in the respiratory chain. The immediate electron acceptor for the enzyme in this species is believed to be ubiquinone. Couples the redox reaction to proton translocation (for every two electrons transferred, four hydrogen ions are translocated across the cytoplasmic membrane), and thus conserves the redox energy in a proton gradient.</text>
</comment>
<comment type="catalytic activity">
    <reaction evidence="1">
        <text>a quinone + NADH + 5 H(+)(in) = a quinol + NAD(+) + 4 H(+)(out)</text>
        <dbReference type="Rhea" id="RHEA:57888"/>
        <dbReference type="ChEBI" id="CHEBI:15378"/>
        <dbReference type="ChEBI" id="CHEBI:24646"/>
        <dbReference type="ChEBI" id="CHEBI:57540"/>
        <dbReference type="ChEBI" id="CHEBI:57945"/>
        <dbReference type="ChEBI" id="CHEBI:132124"/>
    </reaction>
</comment>
<comment type="cofactor">
    <cofactor evidence="1">
        <name>[4Fe-4S] cluster</name>
        <dbReference type="ChEBI" id="CHEBI:49883"/>
    </cofactor>
    <text evidence="1">Binds 1 [4Fe-4S] cluster.</text>
</comment>
<comment type="subunit">
    <text evidence="1">NDH-1 is composed of 14 different subunits. Subunits NuoB, C, D, E, F, and G constitute the peripheral sector of the complex.</text>
</comment>
<comment type="subcellular location">
    <subcellularLocation>
        <location evidence="1">Cell inner membrane</location>
        <topology evidence="1">Peripheral membrane protein</topology>
        <orientation evidence="1">Cytoplasmic side</orientation>
    </subcellularLocation>
</comment>
<comment type="similarity">
    <text evidence="1">Belongs to the complex I 20 kDa subunit family.</text>
</comment>
<dbReference type="EC" id="7.1.1.-" evidence="1"/>
<dbReference type="EMBL" id="AM286280">
    <property type="protein sequence ID" value="CAL08048.1"/>
    <property type="molecule type" value="Genomic_DNA"/>
</dbReference>
<dbReference type="RefSeq" id="WP_003017394.1">
    <property type="nucleotide sequence ID" value="NC_008245.1"/>
</dbReference>
<dbReference type="SMR" id="Q14K37"/>
<dbReference type="KEGG" id="ftf:FTF0032"/>
<dbReference type="HOGENOM" id="CLU_055737_7_3_6"/>
<dbReference type="GO" id="GO:0005886">
    <property type="term" value="C:plasma membrane"/>
    <property type="evidence" value="ECO:0007669"/>
    <property type="project" value="UniProtKB-SubCell"/>
</dbReference>
<dbReference type="GO" id="GO:0045271">
    <property type="term" value="C:respiratory chain complex I"/>
    <property type="evidence" value="ECO:0007669"/>
    <property type="project" value="TreeGrafter"/>
</dbReference>
<dbReference type="GO" id="GO:0051539">
    <property type="term" value="F:4 iron, 4 sulfur cluster binding"/>
    <property type="evidence" value="ECO:0007669"/>
    <property type="project" value="UniProtKB-KW"/>
</dbReference>
<dbReference type="GO" id="GO:0005506">
    <property type="term" value="F:iron ion binding"/>
    <property type="evidence" value="ECO:0007669"/>
    <property type="project" value="UniProtKB-UniRule"/>
</dbReference>
<dbReference type="GO" id="GO:0008137">
    <property type="term" value="F:NADH dehydrogenase (ubiquinone) activity"/>
    <property type="evidence" value="ECO:0007669"/>
    <property type="project" value="InterPro"/>
</dbReference>
<dbReference type="GO" id="GO:0050136">
    <property type="term" value="F:NADH:ubiquinone reductase (non-electrogenic) activity"/>
    <property type="evidence" value="ECO:0007669"/>
    <property type="project" value="UniProtKB-UniRule"/>
</dbReference>
<dbReference type="GO" id="GO:0048038">
    <property type="term" value="F:quinone binding"/>
    <property type="evidence" value="ECO:0007669"/>
    <property type="project" value="UniProtKB-KW"/>
</dbReference>
<dbReference type="GO" id="GO:0009060">
    <property type="term" value="P:aerobic respiration"/>
    <property type="evidence" value="ECO:0007669"/>
    <property type="project" value="TreeGrafter"/>
</dbReference>
<dbReference type="GO" id="GO:0015990">
    <property type="term" value="P:electron transport coupled proton transport"/>
    <property type="evidence" value="ECO:0007669"/>
    <property type="project" value="TreeGrafter"/>
</dbReference>
<dbReference type="FunFam" id="3.40.50.12280:FF:000001">
    <property type="entry name" value="NADH-quinone oxidoreductase subunit B 2"/>
    <property type="match status" value="1"/>
</dbReference>
<dbReference type="Gene3D" id="3.40.50.12280">
    <property type="match status" value="1"/>
</dbReference>
<dbReference type="HAMAP" id="MF_01356">
    <property type="entry name" value="NDH1_NuoB"/>
    <property type="match status" value="1"/>
</dbReference>
<dbReference type="InterPro" id="IPR006137">
    <property type="entry name" value="NADH_UbQ_OxRdtase-like_20kDa"/>
</dbReference>
<dbReference type="InterPro" id="IPR006138">
    <property type="entry name" value="NADH_UQ_OxRdtase_20Kd_su"/>
</dbReference>
<dbReference type="NCBIfam" id="TIGR01957">
    <property type="entry name" value="nuoB_fam"/>
    <property type="match status" value="1"/>
</dbReference>
<dbReference type="NCBIfam" id="NF005012">
    <property type="entry name" value="PRK06411.1"/>
    <property type="match status" value="1"/>
</dbReference>
<dbReference type="PANTHER" id="PTHR11995">
    <property type="entry name" value="NADH DEHYDROGENASE"/>
    <property type="match status" value="1"/>
</dbReference>
<dbReference type="PANTHER" id="PTHR11995:SF14">
    <property type="entry name" value="NADH DEHYDROGENASE [UBIQUINONE] IRON-SULFUR PROTEIN 7, MITOCHONDRIAL"/>
    <property type="match status" value="1"/>
</dbReference>
<dbReference type="Pfam" id="PF01058">
    <property type="entry name" value="Oxidored_q6"/>
    <property type="match status" value="1"/>
</dbReference>
<dbReference type="SUPFAM" id="SSF56770">
    <property type="entry name" value="HydA/Nqo6-like"/>
    <property type="match status" value="1"/>
</dbReference>
<dbReference type="PROSITE" id="PS01150">
    <property type="entry name" value="COMPLEX1_20K"/>
    <property type="match status" value="1"/>
</dbReference>
<keyword id="KW-0004">4Fe-4S</keyword>
<keyword id="KW-0997">Cell inner membrane</keyword>
<keyword id="KW-1003">Cell membrane</keyword>
<keyword id="KW-0408">Iron</keyword>
<keyword id="KW-0411">Iron-sulfur</keyword>
<keyword id="KW-0472">Membrane</keyword>
<keyword id="KW-0479">Metal-binding</keyword>
<keyword id="KW-0520">NAD</keyword>
<keyword id="KW-0874">Quinone</keyword>
<keyword id="KW-1278">Translocase</keyword>
<keyword id="KW-0813">Transport</keyword>
<keyword id="KW-0830">Ubiquinone</keyword>
<sequence length="158" mass="17258">MGIGNENKGFITASADALINWVRTGSLWPVTTGLACCAVEMMHAGAARYDLDRFGIVFRPSPRQSDVLIVAGTLCNKMAPALRQVYDQMPDPKWVISMGSCANGGGYYHYSYSVVRGCDRIVPVDIYVPGCPPTAEALVYGIIQLQNKIIRKDTIARK</sequence>
<feature type="chain" id="PRO_0000376231" description="NADH-quinone oxidoreductase subunit B">
    <location>
        <begin position="1"/>
        <end position="158"/>
    </location>
</feature>
<feature type="binding site" evidence="1">
    <location>
        <position position="36"/>
    </location>
    <ligand>
        <name>[4Fe-4S] cluster</name>
        <dbReference type="ChEBI" id="CHEBI:49883"/>
    </ligand>
</feature>
<feature type="binding site" evidence="1">
    <location>
        <position position="37"/>
    </location>
    <ligand>
        <name>[4Fe-4S] cluster</name>
        <dbReference type="ChEBI" id="CHEBI:49883"/>
    </ligand>
</feature>
<feature type="binding site" evidence="1">
    <location>
        <position position="101"/>
    </location>
    <ligand>
        <name>[4Fe-4S] cluster</name>
        <dbReference type="ChEBI" id="CHEBI:49883"/>
    </ligand>
</feature>
<feature type="binding site" evidence="1">
    <location>
        <position position="131"/>
    </location>
    <ligand>
        <name>[4Fe-4S] cluster</name>
        <dbReference type="ChEBI" id="CHEBI:49883"/>
    </ligand>
</feature>
<gene>
    <name evidence="1" type="primary">nuoB</name>
    <name type="ordered locus">FTF0032</name>
</gene>
<accession>Q14K37</accession>
<reference key="1">
    <citation type="journal article" date="2007" name="PLoS ONE">
        <title>Genome sequencing shows that European isolates of Francisella tularensis subspecies tularensis are almost identical to US laboratory strain Schu S4.</title>
        <authorList>
            <person name="Chaudhuri R.R."/>
            <person name="Ren C.-P."/>
            <person name="Desmond L."/>
            <person name="Vincent G.A."/>
            <person name="Silman N.J."/>
            <person name="Brehm J.K."/>
            <person name="Elmore M.J."/>
            <person name="Hudson M.J."/>
            <person name="Forsman M."/>
            <person name="Isherwood K.E."/>
            <person name="Gurycova D."/>
            <person name="Minton N.P."/>
            <person name="Titball R.W."/>
            <person name="Pallen M.J."/>
            <person name="Vipond R."/>
        </authorList>
    </citation>
    <scope>NUCLEOTIDE SEQUENCE [LARGE SCALE GENOMIC DNA]</scope>
    <source>
        <strain>FSC 198</strain>
    </source>
</reference>
<evidence type="ECO:0000255" key="1">
    <source>
        <dbReference type="HAMAP-Rule" id="MF_01356"/>
    </source>
</evidence>